<reference key="1">
    <citation type="journal article" date="2008" name="J. Bacteriol.">
        <title>Complete genome sequence of uropathogenic Proteus mirabilis, a master of both adherence and motility.</title>
        <authorList>
            <person name="Pearson M.M."/>
            <person name="Sebaihia M."/>
            <person name="Churcher C."/>
            <person name="Quail M.A."/>
            <person name="Seshasayee A.S."/>
            <person name="Luscombe N.M."/>
            <person name="Abdellah Z."/>
            <person name="Arrosmith C."/>
            <person name="Atkin B."/>
            <person name="Chillingworth T."/>
            <person name="Hauser H."/>
            <person name="Jagels K."/>
            <person name="Moule S."/>
            <person name="Mungall K."/>
            <person name="Norbertczak H."/>
            <person name="Rabbinowitsch E."/>
            <person name="Walker D."/>
            <person name="Whithead S."/>
            <person name="Thomson N.R."/>
            <person name="Rather P.N."/>
            <person name="Parkhill J."/>
            <person name="Mobley H.L.T."/>
        </authorList>
    </citation>
    <scope>NUCLEOTIDE SEQUENCE [LARGE SCALE GENOMIC DNA]</scope>
    <source>
        <strain>HI4320</strain>
    </source>
</reference>
<feature type="chain" id="PRO_1000096674" description="DNA mismatch repair protein MutL">
    <location>
        <begin position="1"/>
        <end position="669"/>
    </location>
</feature>
<feature type="region of interest" description="Disordered" evidence="2">
    <location>
        <begin position="361"/>
        <end position="409"/>
    </location>
</feature>
<feature type="compositionally biased region" description="Polar residues" evidence="2">
    <location>
        <begin position="363"/>
        <end position="384"/>
    </location>
</feature>
<feature type="compositionally biased region" description="Polar residues" evidence="2">
    <location>
        <begin position="393"/>
        <end position="402"/>
    </location>
</feature>
<evidence type="ECO:0000255" key="1">
    <source>
        <dbReference type="HAMAP-Rule" id="MF_00149"/>
    </source>
</evidence>
<evidence type="ECO:0000256" key="2">
    <source>
        <dbReference type="SAM" id="MobiDB-lite"/>
    </source>
</evidence>
<proteinExistence type="inferred from homology"/>
<sequence>MAINLLPPQLANQIAAGEVVERPASVVKELLENSLDAGATTIDIDIDKGGAKLIRIRDNGCGISRDDLKLALARHATSKISTLDDLEAIMSMGFRGEALASISSVSRLTLTSRTASQEEAWQAYAEGRDMTVAVKPAAHPVGSTVEVLDLFYNTPARRKFLRTEKTEFGHIDEVVRRIALSRFDVSINLTHNGKRVRQYRAAKETHQHHRRLSAICGNHFVDQAMQLTWEHGDLAIKGWVEHPLAPVQGSEIQYCYVNGRMMRDRLINHAIRQAYEGYLQGEQQPSYVLYLTVDPHQVDVNVHPAKHEVRFHESRLVHDFIYQAVLSVLRQVTEDTLSLDEEDNGALTATTFPENRQVAGENVFSQPYQAPVTSSTQKKSTGAYQGSAGKGLTDTQKSPQKTLDTRQFGESYQRTQGMLYQKMMQESASDVENKEKIPLFPPRPPLNLVDVGHTTNNNETNVISVVPRSVNASAAQTDYTFGRVLAIYQQKYALIESSQGLGLLALEEADFLLKCAQLLPENENLKPQPLLVPLKVTLSKDEINTFKQFQALISDFGIVIDISHGKATIHAVSLPLRQQNLPELLTKLLAYLATEKLCSKQQIGHWLAKQLSHESGVWSQAQAVGLLADIERLCPQYVRQPSKNLLQLIELQPVVAALNNERSKNANKT</sequence>
<keyword id="KW-0227">DNA damage</keyword>
<keyword id="KW-0234">DNA repair</keyword>
<keyword id="KW-1185">Reference proteome</keyword>
<gene>
    <name evidence="1" type="primary">mutL</name>
    <name type="ordered locus">PMI3363</name>
</gene>
<accession>B4F203</accession>
<dbReference type="EMBL" id="AM942759">
    <property type="protein sequence ID" value="CAR46598.1"/>
    <property type="molecule type" value="Genomic_DNA"/>
</dbReference>
<dbReference type="RefSeq" id="WP_012368716.1">
    <property type="nucleotide sequence ID" value="NC_010554.1"/>
</dbReference>
<dbReference type="SMR" id="B4F203"/>
<dbReference type="EnsemblBacteria" id="CAR46598">
    <property type="protein sequence ID" value="CAR46598"/>
    <property type="gene ID" value="PMI3363"/>
</dbReference>
<dbReference type="GeneID" id="6801721"/>
<dbReference type="KEGG" id="pmr:PMI3363"/>
<dbReference type="PATRIC" id="fig|529507.6.peg.3290"/>
<dbReference type="eggNOG" id="COG0323">
    <property type="taxonomic scope" value="Bacteria"/>
</dbReference>
<dbReference type="HOGENOM" id="CLU_004131_5_1_6"/>
<dbReference type="Proteomes" id="UP000008319">
    <property type="component" value="Chromosome"/>
</dbReference>
<dbReference type="GO" id="GO:0032300">
    <property type="term" value="C:mismatch repair complex"/>
    <property type="evidence" value="ECO:0007669"/>
    <property type="project" value="InterPro"/>
</dbReference>
<dbReference type="GO" id="GO:0005524">
    <property type="term" value="F:ATP binding"/>
    <property type="evidence" value="ECO:0007669"/>
    <property type="project" value="InterPro"/>
</dbReference>
<dbReference type="GO" id="GO:0016887">
    <property type="term" value="F:ATP hydrolysis activity"/>
    <property type="evidence" value="ECO:0007669"/>
    <property type="project" value="InterPro"/>
</dbReference>
<dbReference type="GO" id="GO:0140664">
    <property type="term" value="F:ATP-dependent DNA damage sensor activity"/>
    <property type="evidence" value="ECO:0007669"/>
    <property type="project" value="InterPro"/>
</dbReference>
<dbReference type="GO" id="GO:0030983">
    <property type="term" value="F:mismatched DNA binding"/>
    <property type="evidence" value="ECO:0007669"/>
    <property type="project" value="InterPro"/>
</dbReference>
<dbReference type="GO" id="GO:0006298">
    <property type="term" value="P:mismatch repair"/>
    <property type="evidence" value="ECO:0007669"/>
    <property type="project" value="UniProtKB-UniRule"/>
</dbReference>
<dbReference type="CDD" id="cd16926">
    <property type="entry name" value="HATPase_MutL-MLH-PMS-like"/>
    <property type="match status" value="1"/>
</dbReference>
<dbReference type="CDD" id="cd03482">
    <property type="entry name" value="MutL_Trans_MutL"/>
    <property type="match status" value="1"/>
</dbReference>
<dbReference type="FunFam" id="3.30.230.10:FF:000013">
    <property type="entry name" value="DNA mismatch repair endonuclease MutL"/>
    <property type="match status" value="1"/>
</dbReference>
<dbReference type="FunFam" id="3.30.565.10:FF:000003">
    <property type="entry name" value="DNA mismatch repair endonuclease MutL"/>
    <property type="match status" value="1"/>
</dbReference>
<dbReference type="Gene3D" id="3.30.230.10">
    <property type="match status" value="1"/>
</dbReference>
<dbReference type="Gene3D" id="3.30.565.10">
    <property type="entry name" value="Histidine kinase-like ATPase, C-terminal domain"/>
    <property type="match status" value="1"/>
</dbReference>
<dbReference type="Gene3D" id="3.30.1540.20">
    <property type="entry name" value="MutL, C-terminal domain, dimerisation subdomain"/>
    <property type="match status" value="1"/>
</dbReference>
<dbReference type="Gene3D" id="3.30.1370.100">
    <property type="entry name" value="MutL, C-terminal domain, regulatory subdomain"/>
    <property type="match status" value="1"/>
</dbReference>
<dbReference type="HAMAP" id="MF_00149">
    <property type="entry name" value="DNA_mis_repair"/>
    <property type="match status" value="1"/>
</dbReference>
<dbReference type="InterPro" id="IPR014762">
    <property type="entry name" value="DNA_mismatch_repair_CS"/>
</dbReference>
<dbReference type="InterPro" id="IPR020667">
    <property type="entry name" value="DNA_mismatch_repair_MutL"/>
</dbReference>
<dbReference type="InterPro" id="IPR013507">
    <property type="entry name" value="DNA_mismatch_S5_2-like"/>
</dbReference>
<dbReference type="InterPro" id="IPR036890">
    <property type="entry name" value="HATPase_C_sf"/>
</dbReference>
<dbReference type="InterPro" id="IPR002099">
    <property type="entry name" value="MutL/Mlh/PMS"/>
</dbReference>
<dbReference type="InterPro" id="IPR038973">
    <property type="entry name" value="MutL/Mlh/Pms-like"/>
</dbReference>
<dbReference type="InterPro" id="IPR014790">
    <property type="entry name" value="MutL_C"/>
</dbReference>
<dbReference type="InterPro" id="IPR042120">
    <property type="entry name" value="MutL_C_dimsub"/>
</dbReference>
<dbReference type="InterPro" id="IPR042121">
    <property type="entry name" value="MutL_C_regsub"/>
</dbReference>
<dbReference type="InterPro" id="IPR037198">
    <property type="entry name" value="MutL_C_sf"/>
</dbReference>
<dbReference type="InterPro" id="IPR020568">
    <property type="entry name" value="Ribosomal_Su5_D2-typ_SF"/>
</dbReference>
<dbReference type="InterPro" id="IPR014721">
    <property type="entry name" value="Ribsml_uS5_D2-typ_fold_subgr"/>
</dbReference>
<dbReference type="NCBIfam" id="TIGR00585">
    <property type="entry name" value="mutl"/>
    <property type="match status" value="1"/>
</dbReference>
<dbReference type="NCBIfam" id="NF000948">
    <property type="entry name" value="PRK00095.1-1"/>
    <property type="match status" value="1"/>
</dbReference>
<dbReference type="PANTHER" id="PTHR10073">
    <property type="entry name" value="DNA MISMATCH REPAIR PROTEIN MLH, PMS, MUTL"/>
    <property type="match status" value="1"/>
</dbReference>
<dbReference type="PANTHER" id="PTHR10073:SF12">
    <property type="entry name" value="DNA MISMATCH REPAIR PROTEIN MLH1"/>
    <property type="match status" value="1"/>
</dbReference>
<dbReference type="Pfam" id="PF01119">
    <property type="entry name" value="DNA_mis_repair"/>
    <property type="match status" value="1"/>
</dbReference>
<dbReference type="Pfam" id="PF13589">
    <property type="entry name" value="HATPase_c_3"/>
    <property type="match status" value="1"/>
</dbReference>
<dbReference type="Pfam" id="PF08676">
    <property type="entry name" value="MutL_C"/>
    <property type="match status" value="1"/>
</dbReference>
<dbReference type="SMART" id="SM01340">
    <property type="entry name" value="DNA_mis_repair"/>
    <property type="match status" value="1"/>
</dbReference>
<dbReference type="SMART" id="SM00853">
    <property type="entry name" value="MutL_C"/>
    <property type="match status" value="1"/>
</dbReference>
<dbReference type="SUPFAM" id="SSF55874">
    <property type="entry name" value="ATPase domain of HSP90 chaperone/DNA topoisomerase II/histidine kinase"/>
    <property type="match status" value="1"/>
</dbReference>
<dbReference type="SUPFAM" id="SSF118116">
    <property type="entry name" value="DNA mismatch repair protein MutL"/>
    <property type="match status" value="1"/>
</dbReference>
<dbReference type="SUPFAM" id="SSF54211">
    <property type="entry name" value="Ribosomal protein S5 domain 2-like"/>
    <property type="match status" value="1"/>
</dbReference>
<dbReference type="PROSITE" id="PS00058">
    <property type="entry name" value="DNA_MISMATCH_REPAIR_1"/>
    <property type="match status" value="1"/>
</dbReference>
<protein>
    <recommendedName>
        <fullName evidence="1">DNA mismatch repair protein MutL</fullName>
    </recommendedName>
</protein>
<organism>
    <name type="scientific">Proteus mirabilis (strain HI4320)</name>
    <dbReference type="NCBI Taxonomy" id="529507"/>
    <lineage>
        <taxon>Bacteria</taxon>
        <taxon>Pseudomonadati</taxon>
        <taxon>Pseudomonadota</taxon>
        <taxon>Gammaproteobacteria</taxon>
        <taxon>Enterobacterales</taxon>
        <taxon>Morganellaceae</taxon>
        <taxon>Proteus</taxon>
    </lineage>
</organism>
<name>MUTL_PROMH</name>
<comment type="function">
    <text evidence="1">This protein is involved in the repair of mismatches in DNA. It is required for dam-dependent methyl-directed DNA mismatch repair. May act as a 'molecular matchmaker', a protein that promotes the formation of a stable complex between two or more DNA-binding proteins in an ATP-dependent manner without itself being part of a final effector complex.</text>
</comment>
<comment type="similarity">
    <text evidence="1">Belongs to the DNA mismatch repair MutL/HexB family.</text>
</comment>